<name>RSMH_FUSNN</name>
<feature type="chain" id="PRO_0000108629" description="Ribosomal RNA small subunit methyltransferase H">
    <location>
        <begin position="1"/>
        <end position="314"/>
    </location>
</feature>
<feature type="binding site" evidence="1">
    <location>
        <begin position="37"/>
        <end position="39"/>
    </location>
    <ligand>
        <name>S-adenosyl-L-methionine</name>
        <dbReference type="ChEBI" id="CHEBI:59789"/>
    </ligand>
</feature>
<feature type="binding site" evidence="1">
    <location>
        <position position="57"/>
    </location>
    <ligand>
        <name>S-adenosyl-L-methionine</name>
        <dbReference type="ChEBI" id="CHEBI:59789"/>
    </ligand>
</feature>
<feature type="binding site" evidence="1">
    <location>
        <position position="84"/>
    </location>
    <ligand>
        <name>S-adenosyl-L-methionine</name>
        <dbReference type="ChEBI" id="CHEBI:59789"/>
    </ligand>
</feature>
<feature type="binding site" evidence="1">
    <location>
        <position position="105"/>
    </location>
    <ligand>
        <name>S-adenosyl-L-methionine</name>
        <dbReference type="ChEBI" id="CHEBI:59789"/>
    </ligand>
</feature>
<feature type="binding site" evidence="1">
    <location>
        <position position="112"/>
    </location>
    <ligand>
        <name>S-adenosyl-L-methionine</name>
        <dbReference type="ChEBI" id="CHEBI:59789"/>
    </ligand>
</feature>
<organism>
    <name type="scientific">Fusobacterium nucleatum subsp. nucleatum (strain ATCC 25586 / DSM 15643 / BCRC 10681 / CIP 101130 / JCM 8532 / KCTC 2640 / LMG 13131 / VPI 4355)</name>
    <dbReference type="NCBI Taxonomy" id="190304"/>
    <lineage>
        <taxon>Bacteria</taxon>
        <taxon>Fusobacteriati</taxon>
        <taxon>Fusobacteriota</taxon>
        <taxon>Fusobacteriia</taxon>
        <taxon>Fusobacteriales</taxon>
        <taxon>Fusobacteriaceae</taxon>
        <taxon>Fusobacterium</taxon>
    </lineage>
</organism>
<accession>Q8R6F5</accession>
<keyword id="KW-0963">Cytoplasm</keyword>
<keyword id="KW-0489">Methyltransferase</keyword>
<keyword id="KW-1185">Reference proteome</keyword>
<keyword id="KW-0698">rRNA processing</keyword>
<keyword id="KW-0949">S-adenosyl-L-methionine</keyword>
<keyword id="KW-0808">Transferase</keyword>
<proteinExistence type="inferred from homology"/>
<comment type="function">
    <text evidence="1">Specifically methylates the N4 position of cytidine in position 1402 (C1402) of 16S rRNA.</text>
</comment>
<comment type="catalytic activity">
    <reaction evidence="1">
        <text>cytidine(1402) in 16S rRNA + S-adenosyl-L-methionine = N(4)-methylcytidine(1402) in 16S rRNA + S-adenosyl-L-homocysteine + H(+)</text>
        <dbReference type="Rhea" id="RHEA:42928"/>
        <dbReference type="Rhea" id="RHEA-COMP:10286"/>
        <dbReference type="Rhea" id="RHEA-COMP:10287"/>
        <dbReference type="ChEBI" id="CHEBI:15378"/>
        <dbReference type="ChEBI" id="CHEBI:57856"/>
        <dbReference type="ChEBI" id="CHEBI:59789"/>
        <dbReference type="ChEBI" id="CHEBI:74506"/>
        <dbReference type="ChEBI" id="CHEBI:82748"/>
        <dbReference type="EC" id="2.1.1.199"/>
    </reaction>
</comment>
<comment type="subcellular location">
    <subcellularLocation>
        <location evidence="1">Cytoplasm</location>
    </subcellularLocation>
</comment>
<comment type="similarity">
    <text evidence="1">Belongs to the methyltransferase superfamily. RsmH family.</text>
</comment>
<evidence type="ECO:0000255" key="1">
    <source>
        <dbReference type="HAMAP-Rule" id="MF_01007"/>
    </source>
</evidence>
<reference key="1">
    <citation type="journal article" date="2002" name="J. Bacteriol.">
        <title>Genome sequence and analysis of the oral bacterium Fusobacterium nucleatum strain ATCC 25586.</title>
        <authorList>
            <person name="Kapatral V."/>
            <person name="Anderson I."/>
            <person name="Ivanova N."/>
            <person name="Reznik G."/>
            <person name="Los T."/>
            <person name="Lykidis A."/>
            <person name="Bhattacharyya A."/>
            <person name="Bartman A."/>
            <person name="Gardner W."/>
            <person name="Grechkin G."/>
            <person name="Zhu L."/>
            <person name="Vasieva O."/>
            <person name="Chu L."/>
            <person name="Kogan Y."/>
            <person name="Chaga O."/>
            <person name="Goltsman E."/>
            <person name="Bernal A."/>
            <person name="Larsen N."/>
            <person name="D'Souza M."/>
            <person name="Walunas T."/>
            <person name="Pusch G."/>
            <person name="Haselkorn R."/>
            <person name="Fonstein M."/>
            <person name="Kyrpides N.C."/>
            <person name="Overbeek R."/>
        </authorList>
    </citation>
    <scope>NUCLEOTIDE SEQUENCE [LARGE SCALE GENOMIC DNA]</scope>
    <source>
        <strain>ATCC 25586 / DSM 15643 / BCRC 10681 / CIP 101130 / JCM 8532 / KCTC 2640 / LMG 13131 / VPI 4355</strain>
    </source>
</reference>
<gene>
    <name evidence="1" type="primary">rsmH</name>
    <name type="synonym">mraW</name>
    <name type="ordered locus">FN1711</name>
</gene>
<dbReference type="EC" id="2.1.1.199" evidence="1"/>
<dbReference type="EMBL" id="AE009951">
    <property type="protein sequence ID" value="AAL93826.1"/>
    <property type="molecule type" value="Genomic_DNA"/>
</dbReference>
<dbReference type="RefSeq" id="NP_602527.1">
    <property type="nucleotide sequence ID" value="NC_003454.1"/>
</dbReference>
<dbReference type="RefSeq" id="WP_011015778.1">
    <property type="nucleotide sequence ID" value="NZ_OZ209243.1"/>
</dbReference>
<dbReference type="SMR" id="Q8R6F5"/>
<dbReference type="FunCoup" id="Q8R6F5">
    <property type="interactions" value="350"/>
</dbReference>
<dbReference type="STRING" id="190304.FN1711"/>
<dbReference type="PaxDb" id="190304-FN1711"/>
<dbReference type="EnsemblBacteria" id="AAL93826">
    <property type="protein sequence ID" value="AAL93826"/>
    <property type="gene ID" value="FN1711"/>
</dbReference>
<dbReference type="GeneID" id="79782643"/>
<dbReference type="KEGG" id="fnu:FN1711"/>
<dbReference type="PATRIC" id="fig|190304.8.peg.200"/>
<dbReference type="eggNOG" id="COG0275">
    <property type="taxonomic scope" value="Bacteria"/>
</dbReference>
<dbReference type="HOGENOM" id="CLU_038422_2_0_0"/>
<dbReference type="InParanoid" id="Q8R6F5"/>
<dbReference type="BioCyc" id="FNUC190304:G1FZS-212-MONOMER"/>
<dbReference type="Proteomes" id="UP000002521">
    <property type="component" value="Chromosome"/>
</dbReference>
<dbReference type="GO" id="GO:0005737">
    <property type="term" value="C:cytoplasm"/>
    <property type="evidence" value="ECO:0000318"/>
    <property type="project" value="GO_Central"/>
</dbReference>
<dbReference type="GO" id="GO:0071424">
    <property type="term" value="F:rRNA (cytosine-N4-)-methyltransferase activity"/>
    <property type="evidence" value="ECO:0000318"/>
    <property type="project" value="GO_Central"/>
</dbReference>
<dbReference type="GO" id="GO:0070475">
    <property type="term" value="P:rRNA base methylation"/>
    <property type="evidence" value="ECO:0000318"/>
    <property type="project" value="GO_Central"/>
</dbReference>
<dbReference type="FunFam" id="1.10.150.170:FF:000003">
    <property type="entry name" value="Ribosomal RNA small subunit methyltransferase H"/>
    <property type="match status" value="1"/>
</dbReference>
<dbReference type="Gene3D" id="1.10.150.170">
    <property type="entry name" value="Putative methyltransferase TM0872, insert domain"/>
    <property type="match status" value="1"/>
</dbReference>
<dbReference type="Gene3D" id="3.40.50.150">
    <property type="entry name" value="Vaccinia Virus protein VP39"/>
    <property type="match status" value="1"/>
</dbReference>
<dbReference type="HAMAP" id="MF_01007">
    <property type="entry name" value="16SrRNA_methyltr_H"/>
    <property type="match status" value="1"/>
</dbReference>
<dbReference type="InterPro" id="IPR002903">
    <property type="entry name" value="RsmH"/>
</dbReference>
<dbReference type="InterPro" id="IPR023397">
    <property type="entry name" value="SAM-dep_MeTrfase_MraW_recog"/>
</dbReference>
<dbReference type="InterPro" id="IPR029063">
    <property type="entry name" value="SAM-dependent_MTases_sf"/>
</dbReference>
<dbReference type="NCBIfam" id="TIGR00006">
    <property type="entry name" value="16S rRNA (cytosine(1402)-N(4))-methyltransferase RsmH"/>
    <property type="match status" value="1"/>
</dbReference>
<dbReference type="PANTHER" id="PTHR11265:SF0">
    <property type="entry name" value="12S RRNA N4-METHYLCYTIDINE METHYLTRANSFERASE"/>
    <property type="match status" value="1"/>
</dbReference>
<dbReference type="PANTHER" id="PTHR11265">
    <property type="entry name" value="S-ADENOSYL-METHYLTRANSFERASE MRAW"/>
    <property type="match status" value="1"/>
</dbReference>
<dbReference type="Pfam" id="PF01795">
    <property type="entry name" value="Methyltransf_5"/>
    <property type="match status" value="1"/>
</dbReference>
<dbReference type="PIRSF" id="PIRSF004486">
    <property type="entry name" value="MraW"/>
    <property type="match status" value="1"/>
</dbReference>
<dbReference type="SUPFAM" id="SSF81799">
    <property type="entry name" value="Putative methyltransferase TM0872, insert domain"/>
    <property type="match status" value="1"/>
</dbReference>
<dbReference type="SUPFAM" id="SSF53335">
    <property type="entry name" value="S-adenosyl-L-methionine-dependent methyltransferases"/>
    <property type="match status" value="1"/>
</dbReference>
<protein>
    <recommendedName>
        <fullName evidence="1">Ribosomal RNA small subunit methyltransferase H</fullName>
        <ecNumber evidence="1">2.1.1.199</ecNumber>
    </recommendedName>
    <alternativeName>
        <fullName evidence="1">16S rRNA m(4)C1402 methyltransferase</fullName>
    </alternativeName>
    <alternativeName>
        <fullName evidence="1">rRNA (cytosine-N(4)-)-methyltransferase RsmH</fullName>
    </alternativeName>
</protein>
<sequence length="314" mass="35782">MEKIGNDYHIPVLYYETLDNLVINPDGTYIDCTLGGGSHSEGILERLSDKGLLISIDQDTNAIEYSKKRLEKFGSKWKVFKGNFENIDTIAYMAGVDKVDGILMDIGVSSKQLDDPDRGFSYRYDVKLDMRMNTDQKISAYDVVNTYSEEQLSKIIFEYGEERHARKIAKLIVEERKSSPIEKTSDLITLIKRAYPERASKHPAKKTFQAIRIEVNRELEVLENAMSKAVELLKVGGRLAIITFHSLEDRIVKNKFKDLATACKCPKDIPICVCGGVKKFEIITKKPIIPIDDELKNNNRAHSSKLRILERIFD</sequence>